<organism>
    <name type="scientific">Acinetobacter baumannii (strain AYE)</name>
    <dbReference type="NCBI Taxonomy" id="509173"/>
    <lineage>
        <taxon>Bacteria</taxon>
        <taxon>Pseudomonadati</taxon>
        <taxon>Pseudomonadota</taxon>
        <taxon>Gammaproteobacteria</taxon>
        <taxon>Moraxellales</taxon>
        <taxon>Moraxellaceae</taxon>
        <taxon>Acinetobacter</taxon>
        <taxon>Acinetobacter calcoaceticus/baumannii complex</taxon>
    </lineage>
</organism>
<name>DAPB_ACIBY</name>
<comment type="function">
    <text evidence="1">Catalyzes the conversion of 4-hydroxy-tetrahydrodipicolinate (HTPA) to tetrahydrodipicolinate.</text>
</comment>
<comment type="catalytic activity">
    <reaction evidence="1">
        <text>(S)-2,3,4,5-tetrahydrodipicolinate + NAD(+) + H2O = (2S,4S)-4-hydroxy-2,3,4,5-tetrahydrodipicolinate + NADH + H(+)</text>
        <dbReference type="Rhea" id="RHEA:35323"/>
        <dbReference type="ChEBI" id="CHEBI:15377"/>
        <dbReference type="ChEBI" id="CHEBI:15378"/>
        <dbReference type="ChEBI" id="CHEBI:16845"/>
        <dbReference type="ChEBI" id="CHEBI:57540"/>
        <dbReference type="ChEBI" id="CHEBI:57945"/>
        <dbReference type="ChEBI" id="CHEBI:67139"/>
        <dbReference type="EC" id="1.17.1.8"/>
    </reaction>
</comment>
<comment type="catalytic activity">
    <reaction evidence="1">
        <text>(S)-2,3,4,5-tetrahydrodipicolinate + NADP(+) + H2O = (2S,4S)-4-hydroxy-2,3,4,5-tetrahydrodipicolinate + NADPH + H(+)</text>
        <dbReference type="Rhea" id="RHEA:35331"/>
        <dbReference type="ChEBI" id="CHEBI:15377"/>
        <dbReference type="ChEBI" id="CHEBI:15378"/>
        <dbReference type="ChEBI" id="CHEBI:16845"/>
        <dbReference type="ChEBI" id="CHEBI:57783"/>
        <dbReference type="ChEBI" id="CHEBI:58349"/>
        <dbReference type="ChEBI" id="CHEBI:67139"/>
        <dbReference type="EC" id="1.17.1.8"/>
    </reaction>
</comment>
<comment type="pathway">
    <text evidence="1">Amino-acid biosynthesis; L-lysine biosynthesis via DAP pathway; (S)-tetrahydrodipicolinate from L-aspartate: step 4/4.</text>
</comment>
<comment type="subcellular location">
    <subcellularLocation>
        <location evidence="1">Cytoplasm</location>
    </subcellularLocation>
</comment>
<comment type="similarity">
    <text evidence="1">Belongs to the DapB family.</text>
</comment>
<comment type="caution">
    <text evidence="2">Was originally thought to be a dihydrodipicolinate reductase (DHDPR), catalyzing the conversion of dihydrodipicolinate to tetrahydrodipicolinate. However, it was shown in E.coli that the substrate of the enzymatic reaction is not dihydrodipicolinate (DHDP) but in fact (2S,4S)-4-hydroxy-2,3,4,5-tetrahydrodipicolinic acid (HTPA), the product released by the DapA-catalyzed reaction.</text>
</comment>
<proteinExistence type="evidence at protein level"/>
<keyword id="KW-0002">3D-structure</keyword>
<keyword id="KW-0028">Amino-acid biosynthesis</keyword>
<keyword id="KW-0963">Cytoplasm</keyword>
<keyword id="KW-0220">Diaminopimelate biosynthesis</keyword>
<keyword id="KW-0457">Lysine biosynthesis</keyword>
<keyword id="KW-0520">NAD</keyword>
<keyword id="KW-0521">NADP</keyword>
<keyword id="KW-0560">Oxidoreductase</keyword>
<accession>B0VA26</accession>
<dbReference type="EC" id="1.17.1.8" evidence="1"/>
<dbReference type="EMBL" id="CU459141">
    <property type="protein sequence ID" value="CAM85025.1"/>
    <property type="molecule type" value="Genomic_DNA"/>
</dbReference>
<dbReference type="RefSeq" id="WP_001271382.1">
    <property type="nucleotide sequence ID" value="NZ_JBDGFB010000004.1"/>
</dbReference>
<dbReference type="PDB" id="8D57">
    <property type="method" value="X-ray"/>
    <property type="resolution" value="2.65 A"/>
    <property type="chains" value="A/B/C/D/E/F=1-273"/>
</dbReference>
<dbReference type="PDBsum" id="8D57"/>
<dbReference type="SMR" id="B0VA26"/>
<dbReference type="EnsemblBacteria" id="CAM85025">
    <property type="protein sequence ID" value="CAM85025"/>
    <property type="gene ID" value="ABAYE0036"/>
</dbReference>
<dbReference type="KEGG" id="aby:ABAYE0036"/>
<dbReference type="HOGENOM" id="CLU_047479_2_1_6"/>
<dbReference type="UniPathway" id="UPA00034">
    <property type="reaction ID" value="UER00018"/>
</dbReference>
<dbReference type="GO" id="GO:0005829">
    <property type="term" value="C:cytosol"/>
    <property type="evidence" value="ECO:0007669"/>
    <property type="project" value="TreeGrafter"/>
</dbReference>
<dbReference type="GO" id="GO:0008839">
    <property type="term" value="F:4-hydroxy-tetrahydrodipicolinate reductase"/>
    <property type="evidence" value="ECO:0007669"/>
    <property type="project" value="UniProtKB-EC"/>
</dbReference>
<dbReference type="GO" id="GO:0051287">
    <property type="term" value="F:NAD binding"/>
    <property type="evidence" value="ECO:0007669"/>
    <property type="project" value="UniProtKB-UniRule"/>
</dbReference>
<dbReference type="GO" id="GO:0050661">
    <property type="term" value="F:NADP binding"/>
    <property type="evidence" value="ECO:0007669"/>
    <property type="project" value="UniProtKB-UniRule"/>
</dbReference>
<dbReference type="GO" id="GO:0016726">
    <property type="term" value="F:oxidoreductase activity, acting on CH or CH2 groups, NAD or NADP as acceptor"/>
    <property type="evidence" value="ECO:0007669"/>
    <property type="project" value="UniProtKB-UniRule"/>
</dbReference>
<dbReference type="GO" id="GO:0019877">
    <property type="term" value="P:diaminopimelate biosynthetic process"/>
    <property type="evidence" value="ECO:0007669"/>
    <property type="project" value="UniProtKB-UniRule"/>
</dbReference>
<dbReference type="GO" id="GO:0009089">
    <property type="term" value="P:lysine biosynthetic process via diaminopimelate"/>
    <property type="evidence" value="ECO:0007669"/>
    <property type="project" value="UniProtKB-UniRule"/>
</dbReference>
<dbReference type="CDD" id="cd02274">
    <property type="entry name" value="DHDPR_N"/>
    <property type="match status" value="1"/>
</dbReference>
<dbReference type="FunFam" id="3.30.360.10:FF:000004">
    <property type="entry name" value="4-hydroxy-tetrahydrodipicolinate reductase"/>
    <property type="match status" value="1"/>
</dbReference>
<dbReference type="FunFam" id="3.40.50.720:FF:000048">
    <property type="entry name" value="4-hydroxy-tetrahydrodipicolinate reductase"/>
    <property type="match status" value="1"/>
</dbReference>
<dbReference type="Gene3D" id="3.30.360.10">
    <property type="entry name" value="Dihydrodipicolinate Reductase, domain 2"/>
    <property type="match status" value="1"/>
</dbReference>
<dbReference type="Gene3D" id="3.40.50.720">
    <property type="entry name" value="NAD(P)-binding Rossmann-like Domain"/>
    <property type="match status" value="1"/>
</dbReference>
<dbReference type="HAMAP" id="MF_00102">
    <property type="entry name" value="DapB"/>
    <property type="match status" value="1"/>
</dbReference>
<dbReference type="InterPro" id="IPR022663">
    <property type="entry name" value="DapB_C"/>
</dbReference>
<dbReference type="InterPro" id="IPR000846">
    <property type="entry name" value="DapB_N"/>
</dbReference>
<dbReference type="InterPro" id="IPR022664">
    <property type="entry name" value="DapB_N_CS"/>
</dbReference>
<dbReference type="InterPro" id="IPR023940">
    <property type="entry name" value="DHDPR_bac"/>
</dbReference>
<dbReference type="InterPro" id="IPR036291">
    <property type="entry name" value="NAD(P)-bd_dom_sf"/>
</dbReference>
<dbReference type="NCBIfam" id="TIGR00036">
    <property type="entry name" value="dapB"/>
    <property type="match status" value="1"/>
</dbReference>
<dbReference type="PANTHER" id="PTHR20836:SF0">
    <property type="entry name" value="4-HYDROXY-TETRAHYDRODIPICOLINATE REDUCTASE 1, CHLOROPLASTIC-RELATED"/>
    <property type="match status" value="1"/>
</dbReference>
<dbReference type="PANTHER" id="PTHR20836">
    <property type="entry name" value="DIHYDRODIPICOLINATE REDUCTASE"/>
    <property type="match status" value="1"/>
</dbReference>
<dbReference type="Pfam" id="PF05173">
    <property type="entry name" value="DapB_C"/>
    <property type="match status" value="1"/>
</dbReference>
<dbReference type="Pfam" id="PF01113">
    <property type="entry name" value="DapB_N"/>
    <property type="match status" value="1"/>
</dbReference>
<dbReference type="PIRSF" id="PIRSF000161">
    <property type="entry name" value="DHPR"/>
    <property type="match status" value="1"/>
</dbReference>
<dbReference type="SUPFAM" id="SSF55347">
    <property type="entry name" value="Glyceraldehyde-3-phosphate dehydrogenase-like, C-terminal domain"/>
    <property type="match status" value="1"/>
</dbReference>
<dbReference type="SUPFAM" id="SSF51735">
    <property type="entry name" value="NAD(P)-binding Rossmann-fold domains"/>
    <property type="match status" value="1"/>
</dbReference>
<dbReference type="PROSITE" id="PS01298">
    <property type="entry name" value="DAPB"/>
    <property type="match status" value="1"/>
</dbReference>
<reference key="1">
    <citation type="journal article" date="2008" name="PLoS ONE">
        <title>Comparative analysis of Acinetobacters: three genomes for three lifestyles.</title>
        <authorList>
            <person name="Vallenet D."/>
            <person name="Nordmann P."/>
            <person name="Barbe V."/>
            <person name="Poirel L."/>
            <person name="Mangenot S."/>
            <person name="Bataille E."/>
            <person name="Dossat C."/>
            <person name="Gas S."/>
            <person name="Kreimeyer A."/>
            <person name="Lenoble P."/>
            <person name="Oztas S."/>
            <person name="Poulain J."/>
            <person name="Segurens B."/>
            <person name="Robert C."/>
            <person name="Abergel C."/>
            <person name="Claverie J.-M."/>
            <person name="Raoult D."/>
            <person name="Medigue C."/>
            <person name="Weissenbach J."/>
            <person name="Cruveiller S."/>
        </authorList>
    </citation>
    <scope>NUCLEOTIDE SEQUENCE [LARGE SCALE GENOMIC DNA]</scope>
    <source>
        <strain>AYE</strain>
    </source>
</reference>
<gene>
    <name evidence="1" type="primary">dapB</name>
    <name type="ordered locus">ABAYE0036</name>
</gene>
<feature type="chain" id="PRO_1000093937" description="4-hydroxy-tetrahydrodipicolinate reductase">
    <location>
        <begin position="1"/>
        <end position="273"/>
    </location>
</feature>
<feature type="active site" description="Proton donor/acceptor" evidence="1">
    <location>
        <position position="157"/>
    </location>
</feature>
<feature type="active site" description="Proton donor" evidence="1">
    <location>
        <position position="161"/>
    </location>
</feature>
<feature type="binding site" evidence="1">
    <location>
        <begin position="11"/>
        <end position="16"/>
    </location>
    <ligand>
        <name>NAD(+)</name>
        <dbReference type="ChEBI" id="CHEBI:57540"/>
    </ligand>
</feature>
<feature type="binding site" evidence="1">
    <location>
        <position position="37"/>
    </location>
    <ligand>
        <name>NADP(+)</name>
        <dbReference type="ChEBI" id="CHEBI:58349"/>
    </ligand>
</feature>
<feature type="binding site" evidence="1">
    <location>
        <begin position="100"/>
        <end position="102"/>
    </location>
    <ligand>
        <name>NAD(+)</name>
        <dbReference type="ChEBI" id="CHEBI:57540"/>
    </ligand>
</feature>
<feature type="binding site" evidence="1">
    <location>
        <begin position="124"/>
        <end position="127"/>
    </location>
    <ligand>
        <name>NAD(+)</name>
        <dbReference type="ChEBI" id="CHEBI:57540"/>
    </ligand>
</feature>
<feature type="binding site" evidence="1">
    <location>
        <position position="158"/>
    </location>
    <ligand>
        <name>(S)-2,3,4,5-tetrahydrodipicolinate</name>
        <dbReference type="ChEBI" id="CHEBI:16845"/>
    </ligand>
</feature>
<feature type="binding site" evidence="1">
    <location>
        <begin position="167"/>
        <end position="168"/>
    </location>
    <ligand>
        <name>(S)-2,3,4,5-tetrahydrodipicolinate</name>
        <dbReference type="ChEBI" id="CHEBI:16845"/>
    </ligand>
</feature>
<feature type="strand" evidence="3">
    <location>
        <begin position="6"/>
        <end position="11"/>
    </location>
</feature>
<feature type="helix" evidence="3">
    <location>
        <begin position="15"/>
        <end position="26"/>
    </location>
</feature>
<feature type="strand" evidence="3">
    <location>
        <begin position="30"/>
        <end position="35"/>
    </location>
</feature>
<feature type="turn" evidence="3">
    <location>
        <begin position="41"/>
        <end position="44"/>
    </location>
</feature>
<feature type="helix" evidence="3">
    <location>
        <begin position="47"/>
        <end position="50"/>
    </location>
</feature>
<feature type="turn" evidence="3">
    <location>
        <begin position="65"/>
        <end position="67"/>
    </location>
</feature>
<feature type="helix" evidence="3">
    <location>
        <begin position="68"/>
        <end position="70"/>
    </location>
</feature>
<feature type="strand" evidence="3">
    <location>
        <begin position="72"/>
        <end position="76"/>
    </location>
</feature>
<feature type="helix" evidence="3">
    <location>
        <begin position="80"/>
        <end position="93"/>
    </location>
</feature>
<feature type="strand" evidence="3">
    <location>
        <begin position="96"/>
        <end position="99"/>
    </location>
</feature>
<feature type="helix" evidence="3">
    <location>
        <begin position="106"/>
        <end position="115"/>
    </location>
</feature>
<feature type="turn" evidence="3">
    <location>
        <begin position="116"/>
        <end position="118"/>
    </location>
</feature>
<feature type="strand" evidence="3">
    <location>
        <begin position="121"/>
        <end position="123"/>
    </location>
</feature>
<feature type="helix" evidence="3">
    <location>
        <begin position="129"/>
        <end position="145"/>
    </location>
</feature>
<feature type="helix" evidence="3">
    <location>
        <begin position="146"/>
        <end position="148"/>
    </location>
</feature>
<feature type="strand" evidence="3">
    <location>
        <begin position="149"/>
        <end position="157"/>
    </location>
</feature>
<feature type="strand" evidence="3">
    <location>
        <begin position="163"/>
        <end position="165"/>
    </location>
</feature>
<feature type="helix" evidence="3">
    <location>
        <begin position="167"/>
        <end position="180"/>
    </location>
</feature>
<feature type="helix" evidence="3">
    <location>
        <begin position="184"/>
        <end position="187"/>
    </location>
</feature>
<feature type="strand" evidence="3">
    <location>
        <begin position="204"/>
        <end position="210"/>
    </location>
</feature>
<feature type="strand" evidence="3">
    <location>
        <begin position="217"/>
        <end position="223"/>
    </location>
</feature>
<feature type="strand" evidence="3">
    <location>
        <begin position="225"/>
        <end position="237"/>
    </location>
</feature>
<feature type="turn" evidence="3">
    <location>
        <begin position="238"/>
        <end position="240"/>
    </location>
</feature>
<feature type="helix" evidence="3">
    <location>
        <begin position="241"/>
        <end position="252"/>
    </location>
</feature>
<feature type="strand" evidence="3">
    <location>
        <begin position="257"/>
        <end position="260"/>
    </location>
</feature>
<feature type="helix" evidence="3">
    <location>
        <begin position="262"/>
        <end position="265"/>
    </location>
</feature>
<sequence length="273" mass="28753">MSAAPRIGILGAGGRMGRILIQAVQQAGYQLGAAVVRPESTLIGADAGELAGIGSIGVKLTGSLAEVLEDCDVVIDFSTPAATSEHLKLCREAGVAIVIGTTGMSDEQKAELDETAKHIPVVYAANYSVGVNVSIKLLELAAKVFGDTVDIEVIEAHHRHKVDAPSGTALMMGEAIADTLGRNLKEVAVYGREGHTGPRDRQTIGFETIRGGDIVGEHTVMFIGEGERVEVTHKATNRMNFAAGAVRAAAWVVGREARKYDMKDVLGLNDVQV</sequence>
<evidence type="ECO:0000255" key="1">
    <source>
        <dbReference type="HAMAP-Rule" id="MF_00102"/>
    </source>
</evidence>
<evidence type="ECO:0000305" key="2"/>
<evidence type="ECO:0007829" key="3">
    <source>
        <dbReference type="PDB" id="8D57"/>
    </source>
</evidence>
<protein>
    <recommendedName>
        <fullName evidence="1">4-hydroxy-tetrahydrodipicolinate reductase</fullName>
        <shortName evidence="1">HTPA reductase</shortName>
        <ecNumber evidence="1">1.17.1.8</ecNumber>
    </recommendedName>
</protein>